<reference key="1">
    <citation type="journal article" date="1992" name="J. Biol. Chem.">
        <title>Cloning and expression in Escherichia coli of the gene encoding Aspergillus flavus urate oxidase.</title>
        <authorList>
            <person name="Legoux R."/>
            <person name="Delpech B."/>
            <person name="Dumont X."/>
            <person name="Guillemot J.-C."/>
            <person name="Ramond P."/>
            <person name="Shire D."/>
            <person name="Caput D."/>
            <person name="Ferrara P."/>
            <person name="Loison G."/>
        </authorList>
    </citation>
    <scope>NUCLEOTIDE SEQUENCE [GENOMIC DNA / MRNA]</scope>
    <scope>PARTIAL PROTEIN SEQUENCE</scope>
    <scope>ACETYLATION AT SER-2</scope>
    <scope>FUNCTION</scope>
    <scope>CATALYTIC ACTIVITY</scope>
    <scope>PATHWAY</scope>
    <source>
        <strain>ATCC 20047</strain>
    </source>
</reference>
<reference key="2">
    <citation type="journal article" date="1995" name="Biophys. Chem.">
        <title>Study of pH and temperature-induced transitions in urate oxidase (Uox-EC1.7.3.3) by microcalorimetry (DSC), size exclusion chromatography (SEC) and enzymatic activity experiments.</title>
        <authorList>
            <person name="Bayol A."/>
            <person name="Dupin P."/>
            <person name="Boe J.F."/>
            <person name="Claudy P."/>
            <person name="Letoffe J.M."/>
        </authorList>
    </citation>
    <scope>FUNCTION</scope>
    <scope>CATALYTIC ACTIVITY</scope>
    <scope>BIOPHYSICOCHEMICAL PROPERTIES</scope>
    <scope>ACTIVITY REGULATION</scope>
</reference>
<reference key="3">
    <citation type="journal article" date="1997" name="J. Am. Chem. Soc.">
        <title>Identification of the true product of the urate oxidase reaction.</title>
        <authorList>
            <person name="Kahn K."/>
            <person name="Serfozo P."/>
            <person name="Tipton P.A."/>
        </authorList>
    </citation>
    <scope>FUNCTION</scope>
    <scope>CATALYTIC ACTIVITY</scope>
    <scope>BIOPHYSICOCHEMICAL PROPERTIES</scope>
</reference>
<reference key="4">
    <citation type="journal article" date="2017" name="Cochrane Database Syst. Rev.">
        <title>Urate oxidase for the prevention and treatment of tumour lysis syndrome in children with cancer.</title>
        <authorList>
            <person name="Cheuk D.K."/>
            <person name="Chiang A.K."/>
            <person name="Chan G.C."/>
            <person name="Ha S.Y."/>
        </authorList>
    </citation>
    <scope>FUNCTION</scope>
    <scope>BIOTECHNOLOGY</scope>
</reference>
<reference key="5">
    <citation type="journal article" date="1997" name="Nat. Struct. Biol.">
        <title>Crystal structure of the protein drug urate oxidase-inhibitor complex at 2.05-A resolution.</title>
        <authorList>
            <person name="Colloc'h N."/>
            <person name="el Hajji M."/>
            <person name="Bachet B."/>
            <person name="L'Hermite G."/>
            <person name="Schiltz M."/>
            <person name="Prange T."/>
            <person name="Castro B."/>
            <person name="Mornon J.-P."/>
        </authorList>
    </citation>
    <scope>X-RAY CRYSTALLOGRAPHY (2.0 ANGSTROMS) IN COMPLEX WITH INHIBITOR 8-AZAXANTHINE</scope>
    <scope>SUBUNIT</scope>
</reference>
<reference evidence="18 19 20 21" key="6">
    <citation type="journal article" date="2004" name="Acta Crystallogr. D">
        <title>Complexed and ligand-free high-resolution structures of urate oxidase (Uox) from Aspergillus flavus: a reassignment of the active-site binding mode.</title>
        <authorList>
            <person name="Retailleau P."/>
            <person name="Colloc'h N."/>
            <person name="Vivares D."/>
            <person name="Bonnete F."/>
            <person name="Castro B."/>
            <person name="El-Hajji M."/>
            <person name="Mornon J.P."/>
            <person name="Monard G."/>
            <person name="Prange T."/>
        </authorList>
    </citation>
    <scope>X-RAY CRYSTALLOGRAPHY (1.65 ANGSTROMS) OF 2-302</scope>
</reference>
<reference evidence="22 23 24 25 26 27" key="7">
    <citation type="journal article" date="2005" name="Acta Crystallogr. D">
        <title>Urate oxidase from Aspergillus flavus: new crystal-packing contacts in relation to the content of the active site.</title>
        <authorList>
            <person name="Retailleau P."/>
            <person name="Colloc'h N."/>
            <person name="Vivares D."/>
            <person name="Bonnete F."/>
            <person name="Castro B."/>
            <person name="El Hajji M."/>
            <person name="Prange T."/>
        </authorList>
    </citation>
    <scope>X-RAY CRYSTALLOGRAPHY (1.64 ANGSTROMS) OF 2-302 IN COMPLEX WITH GUANINE</scope>
</reference>
<reference evidence="28" key="8">
    <citation type="journal article" date="2006" name="Biochim. Biophys. Acta">
        <title>High pressure macromolecular crystallography: the 140-MPa crystal structure at 2.3 A resolution of urate oxidase, a 135-kDa tetrameric assembly.</title>
        <authorList>
            <person name="Colloc'h N."/>
            <person name="Girard E."/>
            <person name="Dhaussy A.C."/>
            <person name="Kahn R."/>
            <person name="Ascone I."/>
            <person name="Mezouar M."/>
            <person name="Fourme R."/>
        </authorList>
    </citation>
    <scope>X-RAY CRYSTALLOGRAPHY (2.30 ANGSTROMS) OF 2-302</scope>
    <scope>SUBUNIT</scope>
</reference>
<reference evidence="29" key="9">
    <citation type="journal article" date="2006" name="FEBS Lett.">
        <title>Recapture of [S]-allantoin, the product of the two-step degradation of uric acid, by urate oxidase.</title>
        <authorList>
            <person name="Gabison L."/>
            <person name="Chiadmi M."/>
            <person name="Colloc'h N."/>
            <person name="Castro B."/>
            <person name="El Hajji M."/>
            <person name="Prange T."/>
        </authorList>
    </citation>
    <scope>X-RAY CRYSTALLOGRAPHY (1.76 ANGSTROMS) OF 2-302</scope>
</reference>
<reference evidence="30 31 32" key="10">
    <citation type="journal article" date="2007" name="Biophys. J.">
        <title>Protein crystallography under xenon and nitrous oxide pressure: comparison with in vivo pharmacology studies and implications for the mechanism of inhaled anesthetic action.</title>
        <authorList>
            <person name="Colloc'h N."/>
            <person name="Sopkova-de Oliveira Santos J."/>
            <person name="Retailleau P."/>
            <person name="Vivares D."/>
            <person name="Bonnete F."/>
            <person name="Langlois d'Estainto B."/>
            <person name="Gallois B."/>
            <person name="Brisson A."/>
            <person name="Risso J.J."/>
            <person name="Lemaire M."/>
            <person name="Prange T."/>
            <person name="Abraini J.H."/>
        </authorList>
    </citation>
    <scope>X-RAY CRYSTALLOGRAPHY (1.50 ANGSTROMS) OF 2-302</scope>
</reference>
<reference evidence="36 37" key="11">
    <citation type="journal article" date="2008" name="BMC Struct. Biol.">
        <title>Structural analysis of urate oxidase in complex with its natural substrate inhibited by cyanide: mechanistic implications.</title>
        <authorList>
            <person name="Gabison L."/>
            <person name="Prange T."/>
            <person name="Colloc'h N."/>
            <person name="El Hajji M."/>
            <person name="Castro B."/>
            <person name="Chiadmi M."/>
        </authorList>
    </citation>
    <scope>X-RAY CRYSTALLOGRAPHY (1.60 ANGSTROMS) OF 2-302</scope>
</reference>
<reference evidence="34 35 38 39" key="12">
    <citation type="journal article" date="2008" name="Biophys. J.">
        <title>Oxygen pressurized X-ray crystallography: probing the dioxygen binding site in cofactorless urate oxidase and implications for its catalytic mechanism.</title>
        <authorList>
            <person name="Colloc'h N."/>
            <person name="Gabison L."/>
            <person name="Monard G."/>
            <person name="Altarsha M."/>
            <person name="Chiadmi M."/>
            <person name="Marassio G."/>
            <person name="Sopkova-de Oliveira Santos J."/>
            <person name="El Hajji M."/>
            <person name="Castro B."/>
            <person name="Abraini J.H."/>
            <person name="Prange T."/>
        </authorList>
    </citation>
    <scope>X-RAY CRYSTALLOGRAPHY (1.61 ANGSTROMS) OF 2-302</scope>
</reference>
<reference evidence="41" key="13">
    <citation type="journal article" date="2009" name="Cryst. Growth Des.">
        <title>Surfactant poloxamer 188 as a new crystallizing agent for urate oxidase.</title>
        <authorList>
            <person name="Giffard M."/>
            <person name="Delfosse V."/>
            <person name="Sciara G."/>
            <person name="Mayer C."/>
            <person name="Cambillau C."/>
            <person name="El Hajji M."/>
            <person name="Castro B."/>
            <person name="Bonnete F."/>
        </authorList>
    </citation>
    <scope>X-RAY CRYSTALLOGRAPHY (1.60 ANGSTROMS) OF 2-302</scope>
</reference>
<reference evidence="42 43 44 45" key="14">
    <citation type="journal article" date="2010" name="Acta Crystallogr. D">
        <title>Near-atomic resolution structures of urate oxidase complexed with its substrate and analogues: the protonation state of the ligand.</title>
        <authorList>
            <person name="Gabison L."/>
            <person name="Chiadmi M."/>
            <person name="El Hajji M."/>
            <person name="Castro B."/>
            <person name="Colloc'h N."/>
            <person name="Prange T."/>
        </authorList>
    </citation>
    <scope>X-RAY CRYSTALLOGRAPHY (1.00 ANGSTROMS) OF 2-296 IN COMPLEX WITH XANTHINE</scope>
</reference>
<reference evidence="33" key="15">
    <citation type="journal article" date="2010" name="Acta Crystallogr. D">
        <title>A dipicolinate lanthanide complex for solving protein structures using anomalous diffraction.</title>
        <authorList>
            <person name="Pompidor G."/>
            <person name="Maury O."/>
            <person name="Vicat J."/>
            <person name="Kahn R."/>
        </authorList>
    </citation>
    <scope>X-RAY CRYSTALLOGRAPHY (1.60 ANGSTROMS) OF 2-296</scope>
</reference>
<reference evidence="40" key="16">
    <citation type="journal article" date="2010" name="Biophys. J.">
        <title>Structure-function perturbation and dissociation of tetrameric urate oxidase by high hydrostatic pressure.</title>
        <authorList>
            <person name="Girard E."/>
            <person name="Marchal S."/>
            <person name="Perez J."/>
            <person name="Finet S."/>
            <person name="Kahn R."/>
            <person name="Fourme R."/>
            <person name="Marassio G."/>
            <person name="Dhaussy A.C."/>
            <person name="Prange T."/>
            <person name="Giffard M."/>
            <person name="Dulin F."/>
            <person name="Bonnete F."/>
            <person name="Lange R."/>
            <person name="Abraini J.H."/>
            <person name="Mezouar M."/>
            <person name="Colloc'h N."/>
        </authorList>
    </citation>
    <scope>X-RAY CRYSTALLOGRAPHY (1.80 ANGSTROMS) OF 2-302</scope>
</reference>
<reference evidence="47" key="17">
    <citation type="submission" date="2010-10" db="PDB data bank">
        <title>Azide and cyanide have different inhibition modes of urate oxidase.</title>
        <authorList>
            <person name="Gabison L."/>
            <person name="Colloc'h N."/>
            <person name="El Hajji M."/>
            <person name="Castro B."/>
            <person name="Chiadmi M."/>
            <person name="Prange T."/>
        </authorList>
    </citation>
    <scope>X-RAY CRYSTALLOGRAPHY (1.70 ANGSTROMS) OF 2-302</scope>
</reference>
<reference evidence="48" key="18">
    <citation type="submission" date="2010-10" db="PDB data bank">
        <title>Azide and cyanide show different inhibition modes to urate oxidase.</title>
        <authorList>
            <person name="Gabison L."/>
            <person name="Colloc'h N."/>
            <person name="El Hajji M."/>
            <person name="Castro B."/>
            <person name="Chiadmi M."/>
            <person name="Prange T."/>
        </authorList>
    </citation>
    <scope>X-RAY CRYSTALLOGRAPHY (1.45 ANGSTROMS) OF 2-302</scope>
</reference>
<reference evidence="49 50 51 52 53 54 55 56" key="19">
    <citation type="journal article" date="2011" name="FASEB J.">
        <title>Pressure-response analysis of anesthetic gases xenon and nitrous oxide on urate oxidase: a crystallographic study.</title>
        <authorList>
            <person name="Marassio G."/>
            <person name="Prange T."/>
            <person name="David H.N."/>
            <person name="Santos J.S."/>
            <person name="Gabison L."/>
            <person name="Delcroix N."/>
            <person name="Abraini J.H."/>
            <person name="Colloc'h N."/>
        </authorList>
    </citation>
    <scope>X-RAY CRYSTALLOGRAPHY (1.60 ANGSTROMS) OF 2-302</scope>
</reference>
<reference evidence="46" key="20">
    <citation type="journal article" date="2011" name="Proteins">
        <title>X-ray, ESR, and quantum mechanics studies unravel a spin well in the cofactor-less urate oxidase.</title>
        <authorList>
            <person name="Gabison L."/>
            <person name="Chopard C."/>
            <person name="Colloc'h N."/>
            <person name="Peyrot F."/>
            <person name="Castro B."/>
            <person name="El Hajji M."/>
            <person name="Altarsha M."/>
            <person name="Monard G."/>
            <person name="Chiadmi M."/>
            <person name="Prange T."/>
        </authorList>
    </citation>
    <scope>X-RAY CRYSTALLOGRAPHY (1.50 ANGSTROMS) OF 2-302</scope>
</reference>
<reference evidence="77" key="21">
    <citation type="submission" date="2012-06" db="PDB data bank">
        <title>Azide and cyanide have different inhibition modes of urate oxidase.</title>
        <authorList>
            <person name="Gabison L."/>
            <person name="Colloc'h N."/>
            <person name="El Hajji M."/>
            <person name="Castro B."/>
            <person name="Chiadmi M."/>
            <person name="Prange T."/>
        </authorList>
    </citation>
    <scope>X-RAY CRYSTALLOGRAPHY (1.98 ANGSTROMS) OF 2-302</scope>
</reference>
<reference evidence="84 85 86 87" key="22">
    <citation type="journal article" date="2014" name="Acta Crystallogr. F Struct. Biol. Commun.">
        <title>Azide inhibition of urate oxidase.</title>
        <authorList>
            <person name="Gabison L."/>
            <person name="Colloc'h N."/>
            <person name="Prange T."/>
        </authorList>
    </citation>
    <scope>X-RAY CRYSTALLOGRAPHY (1.07 ANGSTROMS) OF 2-302</scope>
    <scope>ACTIVITY REGULATION</scope>
</reference>
<reference evidence="69 70 71 72 73 74 75 76" key="23">
    <citation type="journal article" date="2014" name="Angew. Chem. Int. Ed.">
        <title>Direct evidence for a peroxide intermediate and a reactive enzyme-substrate-dioxygen configuration in a cofactor-free oxidase.</title>
        <authorList>
            <person name="Bui S."/>
            <person name="von Stetten D."/>
            <person name="Jambrina P.G."/>
            <person name="Prange T."/>
            <person name="Colloc'h N."/>
            <person name="de Sanctis D."/>
            <person name="Royant A."/>
            <person name="Rosta E."/>
            <person name="Steiner R.A."/>
        </authorList>
    </citation>
    <scope>X-RAY CRYSTALLOGRAPHY (1.28 ANGSTROMS) OF 2-302</scope>
    <scope>CATALYTIC ACTIVITY</scope>
</reference>
<reference evidence="82 83" key="24">
    <citation type="journal article" date="2014" name="FEBS Lett.">
        <title>Functional relevance of the internal hydrophobic cavity of urate oxidase.</title>
        <authorList>
            <person name="Colloc'h N."/>
            <person name="Prange T."/>
        </authorList>
    </citation>
    <scope>X-RAY CRYSTALLOGRAPHY (1.58 ANGSTROMS) OF 2-302</scope>
</reference>
<reference evidence="78 79 80 81" key="25">
    <citation type="journal article" date="2014" name="PLoS ONE">
        <title>The neutron structure of urate oxidase resolves a long-standing mechanistic conundrum and reveals unexpected changes in protonation.</title>
        <authorList>
            <person name="Oksanen E."/>
            <person name="Blakeley M.P."/>
            <person name="El-Hajji M."/>
            <person name="Ryde U."/>
            <person name="Budayova-Spano M."/>
        </authorList>
    </citation>
    <scope>X-RAY CRYSTALLOGRAPHY (1.06 ANGSTROMS) OF 2-302</scope>
    <scope>ACTIVE SITE</scope>
</reference>
<reference evidence="88" key="26">
    <citation type="journal article" date="2016" name="J. Appl. Crystallogr.">
        <title>Gas-sensitive biological crystals processed in pressurized oxygen and krypton atmospheres: deciphering gas channels in proteins using a novel `soak-and-freeze' methodology.</title>
        <authorList>
            <person name="Lafumat B."/>
            <person name="Mueller-Dieckmann C."/>
            <person name="Colloc'h N."/>
            <person name="Prange T."/>
            <person name="Royant A."/>
            <person name="van der Linden P."/>
            <person name="Carpentier P."/>
        </authorList>
    </citation>
    <scope>X-RAY CRYSTALLOGRAPHY (1.44 ANGSTROMS) OF 2-302</scope>
</reference>
<reference evidence="96" key="27">
    <citation type="submission" date="2019-04" db="PDB data bank">
        <title>Crystal structure of the cofactor-free Aspergillus flavus urate oxidase T57A variant anaerobically complexed with 9-methyl uric acid.</title>
        <authorList>
            <person name="Bui S."/>
            <person name="Lowden S.R.J."/>
            <person name="Steiner R.A."/>
        </authorList>
    </citation>
    <scope>X-RAY CRYSTALLOGRAPHY (1.60 ANGSTROMS)</scope>
</reference>
<reference evidence="97" key="28">
    <citation type="journal article" date="2021" name="IUCrJ">
        <title>Joint neutron/X-ray crystal structure of a mechanistically relevant complex of perdeuterated urate oxidase and simulations provide insight into the hydration step of catalysis.</title>
        <authorList>
            <person name="McGregor L."/>
            <person name="Foeldes T."/>
            <person name="Bui S."/>
            <person name="Moulin M."/>
            <person name="Coquelle N."/>
            <person name="Blakeley M.P."/>
            <person name="Rosta E."/>
            <person name="Steiner R.A."/>
        </authorList>
    </citation>
    <scope>STRUCTURE (1.33 ANGSTROMS)</scope>
</reference>
<reference evidence="89 90 91 92 93 94 95 98" key="29">
    <citation type="submission" date="2021-10" db="PDB data bank">
        <title>Comparative study of the effects of high hydrostatic pressure per se and high argon pressure on urate oxidase ligand stabilization.</title>
        <authorList>
            <person name="Prange T."/>
            <person name="Carpentier P."/>
            <person name="Dhaussy A.C."/>
            <person name="Girard E."/>
            <person name="Colloc'h N."/>
        </authorList>
    </citation>
    <scope>X-RAY CRYSTALLOGRAPHY (1.10 ANGSTROMS) OF 2-302</scope>
</reference>
<organism>
    <name type="scientific">Aspergillus flavus</name>
    <dbReference type="NCBI Taxonomy" id="5059"/>
    <lineage>
        <taxon>Eukaryota</taxon>
        <taxon>Fungi</taxon>
        <taxon>Dikarya</taxon>
        <taxon>Ascomycota</taxon>
        <taxon>Pezizomycotina</taxon>
        <taxon>Eurotiomycetes</taxon>
        <taxon>Eurotiomycetidae</taxon>
        <taxon>Eurotiales</taxon>
        <taxon>Aspergillaceae</taxon>
        <taxon>Aspergillus</taxon>
        <taxon>Aspergillus subgen. Circumdati</taxon>
    </lineage>
</organism>
<protein>
    <recommendedName>
        <fullName evidence="11">Uricase</fullName>
        <ecNumber evidence="2 7">1.7.3.3</ecNumber>
    </recommendedName>
    <alternativeName>
        <fullName evidence="13">Rasburicase</fullName>
    </alternativeName>
    <alternativeName>
        <fullName evidence="11">Urate oxidase</fullName>
    </alternativeName>
</protein>
<keyword id="KW-0002">3D-structure</keyword>
<keyword id="KW-0007">Acetylation</keyword>
<keyword id="KW-0903">Direct protein sequencing</keyword>
<keyword id="KW-0560">Oxidoreductase</keyword>
<keyword id="KW-0576">Peroxisome</keyword>
<keyword id="KW-0659">Purine metabolism</keyword>
<proteinExistence type="evidence at protein level"/>
<feature type="initiator methionine" description="Removed">
    <location>
        <position position="1"/>
    </location>
</feature>
<feature type="chain" id="PRO_0000165995" description="Uricase">
    <location>
        <begin position="2"/>
        <end position="302"/>
    </location>
</feature>
<feature type="short sequence motif" description="Microbody targeting signal" evidence="1">
    <location>
        <begin position="300"/>
        <end position="302"/>
    </location>
</feature>
<feature type="active site" description="Charge relay system" evidence="5 78 79 80 81">
    <location>
        <position position="11"/>
    </location>
</feature>
<feature type="active site" description="Charge relay system" evidence="5 78 79 80 81">
    <location>
        <position position="58"/>
    </location>
</feature>
<feature type="active site" description="Charge relay system" evidence="5 78 79 80 81">
    <location>
        <position position="257"/>
    </location>
</feature>
<feature type="binding site" evidence="16 19 36 42 43 46 73 74 75 76 86">
    <location>
        <position position="58"/>
    </location>
    <ligand>
        <name>5-hydroxyisourate</name>
        <dbReference type="ChEBI" id="CHEBI:18072"/>
    </ligand>
</feature>
<feature type="binding site" evidence="34 35 38 71 72 75 76 82 88">
    <location>
        <position position="58"/>
    </location>
    <ligand>
        <name>O2</name>
        <dbReference type="ChEBI" id="CHEBI:15379"/>
    </ligand>
</feature>
<feature type="binding site" evidence="17 18 20 23 28 29 30 31 32 33 34 35 37 38 39 40 41 44 45 47 49 50 51 52 53 54 55 56 57 58 59 60 61 62 63 64 65 66 67 68 69 70 71 72 80 81 82 83 88">
    <location>
        <position position="58"/>
    </location>
    <ligand>
        <name>urate</name>
        <dbReference type="ChEBI" id="CHEBI:17775"/>
    </ligand>
</feature>
<feature type="binding site" evidence="16 19 36 43 46 73 74 75 76 86">
    <location>
        <position position="59"/>
    </location>
    <ligand>
        <name>5-hydroxyisourate</name>
        <dbReference type="ChEBI" id="CHEBI:18072"/>
    </ligand>
</feature>
<feature type="binding site" evidence="17 18 44 45 69 70 71 72 80">
    <location>
        <position position="59"/>
    </location>
    <ligand>
        <name>urate</name>
        <dbReference type="ChEBI" id="CHEBI:17775"/>
    </ligand>
</feature>
<feature type="binding site" evidence="16 19 29 36 43 44 45 46 73 74 75 76 80 86">
    <location>
        <position position="160"/>
    </location>
    <ligand>
        <name>5-hydroxyisourate</name>
        <dbReference type="ChEBI" id="CHEBI:18072"/>
    </ligand>
</feature>
<feature type="binding site" evidence="17 18 20 24 25 27 28 30 31 32 33 34 35 37 38 39 40 41 42 47 49 50 51 52 53 54 55 56 57 58 59 60 61 62 63 64 65 66 67 68 69 70 71 72 81 82 83 88">
    <location>
        <position position="160"/>
    </location>
    <ligand>
        <name>urate</name>
        <dbReference type="ChEBI" id="CHEBI:17775"/>
    </ligand>
</feature>
<feature type="binding site" evidence="16 19 29 45 74 75 76 80">
    <location>
        <position position="177"/>
    </location>
    <ligand>
        <name>5-hydroxyisourate</name>
        <dbReference type="ChEBI" id="CHEBI:18072"/>
    </ligand>
</feature>
<feature type="binding site" evidence="17 18 20 22 23 24 25 26 27 28 30 31 32 33 34 35 37 38 39 40 41 42 44 47 49 50 51 52 53 54 55 56 57 58 59 60 61 62 63 64 65 66 67 68 69 70 71 72 81 82 83 88">
    <location>
        <position position="177"/>
    </location>
    <ligand>
        <name>urate</name>
        <dbReference type="ChEBI" id="CHEBI:17775"/>
    </ligand>
</feature>
<feature type="binding site" evidence="16 19 36 43 46 73 74 75 76 86">
    <location>
        <position position="228"/>
    </location>
    <ligand>
        <name>5-hydroxyisourate</name>
        <dbReference type="ChEBI" id="CHEBI:18072"/>
    </ligand>
</feature>
<feature type="binding site" evidence="17 18 20 22 25 26 27 28 30 31 32 33 34 35 37 38 39 40 41 42 47 49 50 51 52 53 54 55 56 57 58 59 60 61 62 63 64 65 66 67 68 69 70 71 72 81 82 83 88">
    <location>
        <position position="228"/>
    </location>
    <ligand>
        <name>urate</name>
        <dbReference type="ChEBI" id="CHEBI:17775"/>
    </ligand>
</feature>
<feature type="binding site" evidence="16 19 36 43 74 75 76">
    <location>
        <position position="229"/>
    </location>
    <ligand>
        <name>5-hydroxyisourate</name>
        <dbReference type="ChEBI" id="CHEBI:18072"/>
    </ligand>
</feature>
<feature type="binding site" evidence="17 18 20 22 23 25 26 27 28 30 31 32 33 34 35 37 38 39 40 41 42 44 45 47 49 50 51 52 53 54 55 56 57 58 59 60 61 62 63 64 65 66 67 68 69 70 71 72 80 81 82 83 88">
    <location>
        <position position="229"/>
    </location>
    <ligand>
        <name>urate</name>
        <dbReference type="ChEBI" id="CHEBI:17775"/>
    </ligand>
</feature>
<feature type="binding site" evidence="16 29 74 75 76">
    <location>
        <position position="255"/>
    </location>
    <ligand>
        <name>5-hydroxyisourate</name>
        <dbReference type="ChEBI" id="CHEBI:18072"/>
    </ligand>
</feature>
<feature type="binding site" evidence="34 35 38 71 72 75 76 82 88">
    <location>
        <position position="255"/>
    </location>
    <ligand>
        <name>O2</name>
        <dbReference type="ChEBI" id="CHEBI:15379"/>
    </ligand>
</feature>
<feature type="binding site" evidence="70 71 72">
    <location>
        <position position="255"/>
    </location>
    <ligand>
        <name>urate</name>
        <dbReference type="ChEBI" id="CHEBI:17775"/>
    </ligand>
</feature>
<feature type="modified residue" description="N-acetylserine" evidence="15 18 19 20 21 22 23 24 25 26 27 29 36 77">
    <location>
        <position position="2"/>
    </location>
</feature>
<feature type="strand" evidence="99">
    <location>
        <begin position="9"/>
        <end position="21"/>
    </location>
</feature>
<feature type="turn" evidence="99">
    <location>
        <begin position="23"/>
        <end position="25"/>
    </location>
</feature>
<feature type="strand" evidence="99">
    <location>
        <begin position="28"/>
        <end position="42"/>
    </location>
</feature>
<feature type="helix" evidence="99">
    <location>
        <begin position="44"/>
        <end position="48"/>
    </location>
</feature>
<feature type="helix" evidence="99">
    <location>
        <begin position="52"/>
        <end position="54"/>
    </location>
</feature>
<feature type="helix" evidence="99">
    <location>
        <begin position="58"/>
        <end position="71"/>
    </location>
</feature>
<feature type="helix" evidence="99">
    <location>
        <begin position="77"/>
        <end position="91"/>
    </location>
</feature>
<feature type="strand" evidence="99">
    <location>
        <begin position="95"/>
        <end position="105"/>
    </location>
</feature>
<feature type="strand" evidence="99">
    <location>
        <begin position="108"/>
        <end position="112"/>
    </location>
</feature>
<feature type="strand" evidence="99">
    <location>
        <begin position="115"/>
        <end position="122"/>
    </location>
</feature>
<feature type="strand" evidence="99">
    <location>
        <begin position="128"/>
        <end position="136"/>
    </location>
</feature>
<feature type="turn" evidence="99">
    <location>
        <begin position="137"/>
        <end position="139"/>
    </location>
</feature>
<feature type="strand" evidence="99">
    <location>
        <begin position="140"/>
        <end position="158"/>
    </location>
</feature>
<feature type="strand" evidence="99">
    <location>
        <begin position="174"/>
        <end position="176"/>
    </location>
</feature>
<feature type="strand" evidence="99">
    <location>
        <begin position="179"/>
        <end position="189"/>
    </location>
</feature>
<feature type="strand" evidence="99">
    <location>
        <begin position="192"/>
        <end position="194"/>
    </location>
</feature>
<feature type="helix" evidence="99">
    <location>
        <begin position="195"/>
        <end position="200"/>
    </location>
</feature>
<feature type="helix" evidence="99">
    <location>
        <begin position="202"/>
        <end position="222"/>
    </location>
</feature>
<feature type="helix" evidence="99">
    <location>
        <begin position="228"/>
        <end position="242"/>
    </location>
</feature>
<feature type="strand" evidence="99">
    <location>
        <begin position="246"/>
        <end position="255"/>
    </location>
</feature>
<feature type="strand" evidence="99">
    <location>
        <begin position="258"/>
        <end position="260"/>
    </location>
</feature>
<feature type="turn" evidence="99">
    <location>
        <begin position="264"/>
        <end position="268"/>
    </location>
</feature>
<feature type="helix" evidence="99">
    <location>
        <begin position="273"/>
        <end position="275"/>
    </location>
</feature>
<feature type="strand" evidence="99">
    <location>
        <begin position="279"/>
        <end position="281"/>
    </location>
</feature>
<feature type="strand" evidence="99">
    <location>
        <begin position="287"/>
        <end position="294"/>
    </location>
</feature>
<gene>
    <name evidence="11" type="primary">uaZ</name>
    <name evidence="12" type="synonym">Uox</name>
</gene>
<accession>Q00511</accession>
<name>URIC_ASPFL</name>
<dbReference type="EC" id="1.7.3.3" evidence="2 7"/>
<dbReference type="EMBL" id="X61766">
    <property type="protein sequence ID" value="CAA43896.1"/>
    <property type="molecule type" value="mRNA"/>
</dbReference>
<dbReference type="EMBL" id="X61765">
    <property type="protein sequence ID" value="CAA43895.1"/>
    <property type="molecule type" value="Genomic_DNA"/>
</dbReference>
<dbReference type="PIR" id="A38097">
    <property type="entry name" value="A38097"/>
</dbReference>
<dbReference type="PDB" id="1R4S">
    <property type="method" value="X-ray"/>
    <property type="resolution" value="1.80 A"/>
    <property type="chains" value="A=2-302"/>
</dbReference>
<dbReference type="PDB" id="1R4U">
    <property type="method" value="X-ray"/>
    <property type="resolution" value="1.65 A"/>
    <property type="chains" value="A=2-302"/>
</dbReference>
<dbReference type="PDB" id="1R51">
    <property type="method" value="X-ray"/>
    <property type="resolution" value="1.75 A"/>
    <property type="chains" value="A=2-302"/>
</dbReference>
<dbReference type="PDB" id="1R56">
    <property type="method" value="X-ray"/>
    <property type="resolution" value="2.30 A"/>
    <property type="chains" value="A/B/C/D/E/F/G/H=2-302"/>
</dbReference>
<dbReference type="PDB" id="1WRR">
    <property type="method" value="X-ray"/>
    <property type="resolution" value="1.64 A"/>
    <property type="chains" value="A=2-302"/>
</dbReference>
<dbReference type="PDB" id="1WS2">
    <property type="method" value="X-ray"/>
    <property type="resolution" value="2.70 A"/>
    <property type="chains" value="A/B/C/D=2-302"/>
</dbReference>
<dbReference type="PDB" id="1WS3">
    <property type="method" value="X-ray"/>
    <property type="resolution" value="3.20 A"/>
    <property type="chains" value="A/B/C/D=2-302"/>
</dbReference>
<dbReference type="PDB" id="1XT4">
    <property type="method" value="X-ray"/>
    <property type="resolution" value="2.01 A"/>
    <property type="chains" value="A=2-302"/>
</dbReference>
<dbReference type="PDB" id="1XXJ">
    <property type="method" value="X-ray"/>
    <property type="resolution" value="2.80 A"/>
    <property type="chains" value="A/B/C/D=2-302"/>
</dbReference>
<dbReference type="PDB" id="1XY3">
    <property type="method" value="X-ray"/>
    <property type="resolution" value="3.20 A"/>
    <property type="chains" value="A/B/C/D/E/F/G/H=2-302"/>
</dbReference>
<dbReference type="PDB" id="2FUB">
    <property type="method" value="X-ray"/>
    <property type="resolution" value="2.30 A"/>
    <property type="chains" value="A=2-302"/>
</dbReference>
<dbReference type="PDB" id="2FXL">
    <property type="method" value="X-ray"/>
    <property type="resolution" value="1.76 A"/>
    <property type="chains" value="A=2-302"/>
</dbReference>
<dbReference type="PDB" id="2IBA">
    <property type="method" value="X-ray"/>
    <property type="resolution" value="1.50 A"/>
    <property type="chains" value="A=2-302"/>
</dbReference>
<dbReference type="PDB" id="2IC0">
    <property type="method" value="X-ray"/>
    <property type="resolution" value="1.78 A"/>
    <property type="chains" value="A=2-302"/>
</dbReference>
<dbReference type="PDB" id="2ICQ">
    <property type="method" value="X-ray"/>
    <property type="resolution" value="1.75 A"/>
    <property type="chains" value="A=2-302"/>
</dbReference>
<dbReference type="PDB" id="2PES">
    <property type="method" value="X-ray"/>
    <property type="resolution" value="1.60 A"/>
    <property type="chains" value="A=2-296"/>
</dbReference>
<dbReference type="PDB" id="2ZKA">
    <property type="method" value="X-ray"/>
    <property type="resolution" value="1.61 A"/>
    <property type="chains" value="A=2-302"/>
</dbReference>
<dbReference type="PDB" id="2ZKB">
    <property type="method" value="X-ray"/>
    <property type="resolution" value="1.61 A"/>
    <property type="chains" value="A=2-302"/>
</dbReference>
<dbReference type="PDB" id="3BJP">
    <property type="method" value="X-ray"/>
    <property type="resolution" value="1.80 A"/>
    <property type="chains" value="A=2-302"/>
</dbReference>
<dbReference type="PDB" id="3BK8">
    <property type="method" value="X-ray"/>
    <property type="resolution" value="1.60 A"/>
    <property type="chains" value="A=2-302"/>
</dbReference>
<dbReference type="PDB" id="3CKS">
    <property type="method" value="X-ray"/>
    <property type="resolution" value="1.70 A"/>
    <property type="chains" value="A=2-302"/>
</dbReference>
<dbReference type="PDB" id="3CKU">
    <property type="method" value="X-ray"/>
    <property type="resolution" value="1.70 A"/>
    <property type="chains" value="A=2-302"/>
</dbReference>
<dbReference type="PDB" id="3F2M">
    <property type="method" value="X-ray"/>
    <property type="resolution" value="1.80 A"/>
    <property type="chains" value="A=2-302"/>
</dbReference>
<dbReference type="PDB" id="3GKO">
    <property type="method" value="X-ray"/>
    <property type="resolution" value="1.60 A"/>
    <property type="chains" value="A=2-302"/>
</dbReference>
<dbReference type="PDB" id="3L8W">
    <property type="method" value="X-ray"/>
    <property type="resolution" value="1.00 A"/>
    <property type="chains" value="A=2-296"/>
</dbReference>
<dbReference type="PDB" id="3L9G">
    <property type="method" value="X-ray"/>
    <property type="resolution" value="1.75 A"/>
    <property type="chains" value="A=2-296"/>
</dbReference>
<dbReference type="PDB" id="3LBG">
    <property type="method" value="X-ray"/>
    <property type="resolution" value="1.50 A"/>
    <property type="chains" value="A=2-296"/>
</dbReference>
<dbReference type="PDB" id="3LD4">
    <property type="method" value="X-ray"/>
    <property type="resolution" value="1.35 A"/>
    <property type="chains" value="A=2-296"/>
</dbReference>
<dbReference type="PDB" id="3OBP">
    <property type="method" value="X-ray"/>
    <property type="resolution" value="1.50 A"/>
    <property type="chains" value="A=2-302"/>
</dbReference>
<dbReference type="PDB" id="3P9F">
    <property type="method" value="X-ray"/>
    <property type="resolution" value="1.70 A"/>
    <property type="chains" value="A=2-302"/>
</dbReference>
<dbReference type="PDB" id="3P9O">
    <property type="method" value="X-ray"/>
    <property type="resolution" value="1.45 A"/>
    <property type="chains" value="A=2-302"/>
</dbReference>
<dbReference type="PDB" id="3PJK">
    <property type="method" value="X-ray"/>
    <property type="resolution" value="1.70 A"/>
    <property type="chains" value="A=2-302"/>
</dbReference>
<dbReference type="PDB" id="3PK3">
    <property type="method" value="X-ray"/>
    <property type="resolution" value="1.65 A"/>
    <property type="chains" value="A=2-302"/>
</dbReference>
<dbReference type="PDB" id="3PK4">
    <property type="method" value="X-ray"/>
    <property type="resolution" value="1.85 A"/>
    <property type="chains" value="A=2-302"/>
</dbReference>
<dbReference type="PDB" id="3PK5">
    <property type="method" value="X-ray"/>
    <property type="resolution" value="1.75 A"/>
    <property type="chains" value="A=2-302"/>
</dbReference>
<dbReference type="PDB" id="3PK6">
    <property type="method" value="X-ray"/>
    <property type="resolution" value="1.80 A"/>
    <property type="chains" value="A=2-302"/>
</dbReference>
<dbReference type="PDB" id="3PK8">
    <property type="method" value="X-ray"/>
    <property type="resolution" value="1.65 A"/>
    <property type="chains" value="A=2-302"/>
</dbReference>
<dbReference type="PDB" id="3PKF">
    <property type="method" value="X-ray"/>
    <property type="resolution" value="1.65 A"/>
    <property type="chains" value="A=2-302"/>
</dbReference>
<dbReference type="PDB" id="3PKG">
    <property type="method" value="X-ray"/>
    <property type="resolution" value="1.60 A"/>
    <property type="chains" value="A=2-302"/>
</dbReference>
<dbReference type="PDB" id="3PKH">
    <property type="method" value="X-ray"/>
    <property type="resolution" value="1.71 A"/>
    <property type="chains" value="A=2-302"/>
</dbReference>
<dbReference type="PDB" id="3PKK">
    <property type="method" value="X-ray"/>
    <property type="resolution" value="1.73 A"/>
    <property type="chains" value="A=2-302"/>
</dbReference>
<dbReference type="PDB" id="3PKL">
    <property type="method" value="X-ray"/>
    <property type="resolution" value="1.75 A"/>
    <property type="chains" value="A=2-302"/>
</dbReference>
<dbReference type="PDB" id="3PKS">
    <property type="method" value="X-ray"/>
    <property type="resolution" value="1.75 A"/>
    <property type="chains" value="A=2-302"/>
</dbReference>
<dbReference type="PDB" id="3PKT">
    <property type="method" value="X-ray"/>
    <property type="resolution" value="1.75 A"/>
    <property type="chains" value="A=2-302"/>
</dbReference>
<dbReference type="PDB" id="3PKU">
    <property type="method" value="X-ray"/>
    <property type="resolution" value="1.75 A"/>
    <property type="chains" value="A=2-302"/>
</dbReference>
<dbReference type="PDB" id="3PLE">
    <property type="method" value="X-ray"/>
    <property type="resolution" value="1.60 A"/>
    <property type="chains" value="A=2-302"/>
</dbReference>
<dbReference type="PDB" id="3PLG">
    <property type="method" value="X-ray"/>
    <property type="resolution" value="1.60 A"/>
    <property type="chains" value="A=2-302"/>
</dbReference>
<dbReference type="PDB" id="3PLH">
    <property type="method" value="X-ray"/>
    <property type="resolution" value="1.80 A"/>
    <property type="chains" value="A=2-302"/>
</dbReference>
<dbReference type="PDB" id="3PLI">
    <property type="method" value="X-ray"/>
    <property type="resolution" value="1.68 A"/>
    <property type="chains" value="A=2-302"/>
</dbReference>
<dbReference type="PDB" id="3PLJ">
    <property type="method" value="X-ray"/>
    <property type="resolution" value="1.73 A"/>
    <property type="chains" value="A=2-302"/>
</dbReference>
<dbReference type="PDB" id="3PLM">
    <property type="method" value="X-ray"/>
    <property type="resolution" value="1.62 A"/>
    <property type="chains" value="A=2-302"/>
</dbReference>
<dbReference type="PDB" id="4CW0">
    <property type="method" value="X-ray"/>
    <property type="resolution" value="1.50 A"/>
    <property type="chains" value="A=2-302"/>
</dbReference>
<dbReference type="PDB" id="4CW2">
    <property type="method" value="X-ray"/>
    <property type="resolution" value="1.32 A"/>
    <property type="chains" value="A=2-302"/>
</dbReference>
<dbReference type="PDB" id="4CW3">
    <property type="method" value="X-ray"/>
    <property type="resolution" value="1.34 A"/>
    <property type="chains" value="A=2-302"/>
</dbReference>
<dbReference type="PDB" id="4CW6">
    <property type="method" value="X-ray"/>
    <property type="resolution" value="1.28 A"/>
    <property type="chains" value="A=2-302"/>
</dbReference>
<dbReference type="PDB" id="4D12">
    <property type="method" value="X-ray"/>
    <property type="resolution" value="1.40 A"/>
    <property type="chains" value="A=1-302"/>
</dbReference>
<dbReference type="PDB" id="4D13">
    <property type="method" value="X-ray"/>
    <property type="resolution" value="1.30 A"/>
    <property type="chains" value="A=1-302"/>
</dbReference>
<dbReference type="PDB" id="4D17">
    <property type="method" value="X-ray"/>
    <property type="resolution" value="1.30 A"/>
    <property type="chains" value="A=1-302"/>
</dbReference>
<dbReference type="PDB" id="4D19">
    <property type="method" value="X-ray"/>
    <property type="resolution" value="1.35 A"/>
    <property type="chains" value="A=1-302"/>
</dbReference>
<dbReference type="PDB" id="4FSK">
    <property type="method" value="X-ray"/>
    <property type="resolution" value="1.98 A"/>
    <property type="chains" value="A=2-302"/>
</dbReference>
<dbReference type="PDB" id="4N3M">
    <property type="method" value="Other"/>
    <property type="resolution" value="1.90 A"/>
    <property type="chains" value="A=2-302"/>
</dbReference>
<dbReference type="PDB" id="4N9M">
    <property type="method" value="Other"/>
    <property type="resolution" value="2.30 A"/>
    <property type="chains" value="A=2-302"/>
</dbReference>
<dbReference type="PDB" id="4N9S">
    <property type="method" value="X-ray"/>
    <property type="resolution" value="1.06 A"/>
    <property type="chains" value="A=2-302"/>
</dbReference>
<dbReference type="PDB" id="4N9V">
    <property type="method" value="X-ray"/>
    <property type="resolution" value="1.10 A"/>
    <property type="chains" value="A=2-302"/>
</dbReference>
<dbReference type="PDB" id="4OP6">
    <property type="method" value="X-ray"/>
    <property type="resolution" value="1.65 A"/>
    <property type="chains" value="A=2-302"/>
</dbReference>
<dbReference type="PDB" id="4OP9">
    <property type="method" value="X-ray"/>
    <property type="resolution" value="1.58 A"/>
    <property type="chains" value="A=2-302"/>
</dbReference>
<dbReference type="PDB" id="4OQC">
    <property type="method" value="X-ray"/>
    <property type="resolution" value="1.30 A"/>
    <property type="chains" value="A=2-302"/>
</dbReference>
<dbReference type="PDB" id="4POE">
    <property type="method" value="X-ray"/>
    <property type="resolution" value="1.07 A"/>
    <property type="chains" value="A=2-302"/>
</dbReference>
<dbReference type="PDB" id="4PR8">
    <property type="method" value="X-ray"/>
    <property type="resolution" value="1.16 A"/>
    <property type="chains" value="A=2-296"/>
</dbReference>
<dbReference type="PDB" id="4PUV">
    <property type="method" value="X-ray"/>
    <property type="resolution" value="1.30 A"/>
    <property type="chains" value="A=2-302"/>
</dbReference>
<dbReference type="PDB" id="5FRC">
    <property type="method" value="X-ray"/>
    <property type="resolution" value="1.44 A"/>
    <property type="chains" value="A=2-302"/>
</dbReference>
<dbReference type="PDB" id="6I9X">
    <property type="method" value="X-ray"/>
    <property type="resolution" value="1.60 A"/>
    <property type="chains" value="A=2-302"/>
</dbReference>
<dbReference type="PDB" id="6I9Z">
    <property type="method" value="X-ray"/>
    <property type="resolution" value="1.60 A"/>
    <property type="chains" value="A=2-302"/>
</dbReference>
<dbReference type="PDB" id="6IA1">
    <property type="method" value="X-ray"/>
    <property type="resolution" value="2.36 A"/>
    <property type="chains" value="A=2-302"/>
</dbReference>
<dbReference type="PDB" id="6IA3">
    <property type="method" value="X-ray"/>
    <property type="resolution" value="1.69 A"/>
    <property type="chains" value="A=2-302"/>
</dbReference>
<dbReference type="PDB" id="6IA9">
    <property type="method" value="X-ray"/>
    <property type="resolution" value="1.80 A"/>
    <property type="chains" value="A/B=2-302"/>
</dbReference>
<dbReference type="PDB" id="6IC1">
    <property type="method" value="X-ray"/>
    <property type="resolution" value="1.10 A"/>
    <property type="chains" value="A=2-302"/>
</dbReference>
<dbReference type="PDB" id="6RGM">
    <property type="method" value="X-ray"/>
    <property type="resolution" value="1.50 A"/>
    <property type="chains" value="A=2-302"/>
</dbReference>
<dbReference type="PDB" id="6RGT">
    <property type="method" value="X-ray"/>
    <property type="resolution" value="1.60 A"/>
    <property type="chains" value="A=1-302"/>
</dbReference>
<dbReference type="PDB" id="7A0L">
    <property type="method" value="Other"/>
    <property type="resolution" value="1.33 A"/>
    <property type="chains" value="A=1-302"/>
</dbReference>
<dbReference type="PDB" id="7P0C">
    <property type="method" value="X-ray"/>
    <property type="resolution" value="2.15 A"/>
    <property type="chains" value="A=2-302"/>
</dbReference>
<dbReference type="PDB" id="7P0D">
    <property type="method" value="X-ray"/>
    <property type="resolution" value="2.40 A"/>
    <property type="chains" value="A=2-302"/>
</dbReference>
<dbReference type="PDB" id="7P0G">
    <property type="method" value="X-ray"/>
    <property type="resolution" value="1.90 A"/>
    <property type="chains" value="A=2-302"/>
</dbReference>
<dbReference type="PDB" id="7PUF">
    <property type="method" value="X-ray"/>
    <property type="resolution" value="1.86 A"/>
    <property type="chains" value="A/B=2-296"/>
</dbReference>
<dbReference type="PDB" id="7PWN">
    <property type="method" value="X-ray"/>
    <property type="resolution" value="1.64 A"/>
    <property type="chains" value="A/B=2-296"/>
</dbReference>
<dbReference type="PDB" id="7Q09">
    <property type="method" value="X-ray"/>
    <property type="resolution" value="2.19 A"/>
    <property type="chains" value="A/B=2-296"/>
</dbReference>
<dbReference type="PDB" id="7QAR">
    <property type="method" value="X-ray"/>
    <property type="resolution" value="2.30 A"/>
    <property type="chains" value="AAA=1-302"/>
</dbReference>
<dbReference type="PDBsum" id="1R4S"/>
<dbReference type="PDBsum" id="1R4U"/>
<dbReference type="PDBsum" id="1R51"/>
<dbReference type="PDBsum" id="1R56"/>
<dbReference type="PDBsum" id="1WRR"/>
<dbReference type="PDBsum" id="1WS2"/>
<dbReference type="PDBsum" id="1WS3"/>
<dbReference type="PDBsum" id="1XT4"/>
<dbReference type="PDBsum" id="1XXJ"/>
<dbReference type="PDBsum" id="1XY3"/>
<dbReference type="PDBsum" id="2FUB"/>
<dbReference type="PDBsum" id="2FXL"/>
<dbReference type="PDBsum" id="2IBA"/>
<dbReference type="PDBsum" id="2IC0"/>
<dbReference type="PDBsum" id="2ICQ"/>
<dbReference type="PDBsum" id="2PES"/>
<dbReference type="PDBsum" id="2ZKA"/>
<dbReference type="PDBsum" id="2ZKB"/>
<dbReference type="PDBsum" id="3BJP"/>
<dbReference type="PDBsum" id="3BK8"/>
<dbReference type="PDBsum" id="3CKS"/>
<dbReference type="PDBsum" id="3CKU"/>
<dbReference type="PDBsum" id="3F2M"/>
<dbReference type="PDBsum" id="3GKO"/>
<dbReference type="PDBsum" id="3L8W"/>
<dbReference type="PDBsum" id="3L9G"/>
<dbReference type="PDBsum" id="3LBG"/>
<dbReference type="PDBsum" id="3LD4"/>
<dbReference type="PDBsum" id="3OBP"/>
<dbReference type="PDBsum" id="3P9F"/>
<dbReference type="PDBsum" id="3P9O"/>
<dbReference type="PDBsum" id="3PJK"/>
<dbReference type="PDBsum" id="3PK3"/>
<dbReference type="PDBsum" id="3PK4"/>
<dbReference type="PDBsum" id="3PK5"/>
<dbReference type="PDBsum" id="3PK6"/>
<dbReference type="PDBsum" id="3PK8"/>
<dbReference type="PDBsum" id="3PKF"/>
<dbReference type="PDBsum" id="3PKG"/>
<dbReference type="PDBsum" id="3PKH"/>
<dbReference type="PDBsum" id="3PKK"/>
<dbReference type="PDBsum" id="3PKL"/>
<dbReference type="PDBsum" id="3PKS"/>
<dbReference type="PDBsum" id="3PKT"/>
<dbReference type="PDBsum" id="3PKU"/>
<dbReference type="PDBsum" id="3PLE"/>
<dbReference type="PDBsum" id="3PLG"/>
<dbReference type="PDBsum" id="3PLH"/>
<dbReference type="PDBsum" id="3PLI"/>
<dbReference type="PDBsum" id="3PLJ"/>
<dbReference type="PDBsum" id="3PLM"/>
<dbReference type="PDBsum" id="4CW0"/>
<dbReference type="PDBsum" id="4CW2"/>
<dbReference type="PDBsum" id="4CW3"/>
<dbReference type="PDBsum" id="4CW6"/>
<dbReference type="PDBsum" id="4D12"/>
<dbReference type="PDBsum" id="4D13"/>
<dbReference type="PDBsum" id="4D17"/>
<dbReference type="PDBsum" id="4D19"/>
<dbReference type="PDBsum" id="4FSK"/>
<dbReference type="PDBsum" id="4N3M"/>
<dbReference type="PDBsum" id="4N9M"/>
<dbReference type="PDBsum" id="4N9S"/>
<dbReference type="PDBsum" id="4N9V"/>
<dbReference type="PDBsum" id="4OP6"/>
<dbReference type="PDBsum" id="4OP9"/>
<dbReference type="PDBsum" id="4OQC"/>
<dbReference type="PDBsum" id="4POE"/>
<dbReference type="PDBsum" id="4PR8"/>
<dbReference type="PDBsum" id="4PUV"/>
<dbReference type="PDBsum" id="5FRC"/>
<dbReference type="PDBsum" id="6I9X"/>
<dbReference type="PDBsum" id="6I9Z"/>
<dbReference type="PDBsum" id="6IA1"/>
<dbReference type="PDBsum" id="6IA3"/>
<dbReference type="PDBsum" id="6IA9"/>
<dbReference type="PDBsum" id="6IC1"/>
<dbReference type="PDBsum" id="6RGM"/>
<dbReference type="PDBsum" id="6RGT"/>
<dbReference type="PDBsum" id="7A0L"/>
<dbReference type="PDBsum" id="7P0C"/>
<dbReference type="PDBsum" id="7P0D"/>
<dbReference type="PDBsum" id="7P0G"/>
<dbReference type="PDBsum" id="7PUF"/>
<dbReference type="PDBsum" id="7PWN"/>
<dbReference type="PDBsum" id="7Q09"/>
<dbReference type="PDBsum" id="7QAR"/>
<dbReference type="SASBDB" id="Q00511"/>
<dbReference type="SMR" id="Q00511"/>
<dbReference type="iPTMnet" id="Q00511"/>
<dbReference type="EnsemblFungi" id="EED52707">
    <property type="protein sequence ID" value="EED52707"/>
    <property type="gene ID" value="AFLA_044090"/>
</dbReference>
<dbReference type="VEuPathDB" id="FungiDB:AFLA_007981"/>
<dbReference type="VEuPathDB" id="FungiDB:F9C07_2229599"/>
<dbReference type="OMA" id="ATMYKMS"/>
<dbReference type="OrthoDB" id="9992118at2759"/>
<dbReference type="BRENDA" id="1.7.3.3">
    <property type="organism ID" value="506"/>
</dbReference>
<dbReference type="UniPathway" id="UPA00394">
    <property type="reaction ID" value="UER00650"/>
</dbReference>
<dbReference type="EvolutionaryTrace" id="Q00511"/>
<dbReference type="GO" id="GO:0005777">
    <property type="term" value="C:peroxisome"/>
    <property type="evidence" value="ECO:0007669"/>
    <property type="project" value="UniProtKB-SubCell"/>
</dbReference>
<dbReference type="GO" id="GO:0004846">
    <property type="term" value="F:urate oxidase activity"/>
    <property type="evidence" value="ECO:0007669"/>
    <property type="project" value="UniProtKB-EC"/>
</dbReference>
<dbReference type="GO" id="GO:0006145">
    <property type="term" value="P:purine nucleobase catabolic process"/>
    <property type="evidence" value="ECO:0007669"/>
    <property type="project" value="TreeGrafter"/>
</dbReference>
<dbReference type="GO" id="GO:0019628">
    <property type="term" value="P:urate catabolic process"/>
    <property type="evidence" value="ECO:0007669"/>
    <property type="project" value="UniProtKB-UniPathway"/>
</dbReference>
<dbReference type="CDD" id="cd00445">
    <property type="entry name" value="Uricase"/>
    <property type="match status" value="1"/>
</dbReference>
<dbReference type="FunFam" id="3.10.270.10:FF:000001">
    <property type="entry name" value="Uricase"/>
    <property type="match status" value="1"/>
</dbReference>
<dbReference type="Gene3D" id="3.10.270.10">
    <property type="entry name" value="Urate Oxidase"/>
    <property type="match status" value="1"/>
</dbReference>
<dbReference type="InterPro" id="IPR002042">
    <property type="entry name" value="Uricase"/>
</dbReference>
<dbReference type="InterPro" id="IPR019842">
    <property type="entry name" value="Uricase_CS"/>
</dbReference>
<dbReference type="NCBIfam" id="TIGR03383">
    <property type="entry name" value="urate_oxi"/>
    <property type="match status" value="1"/>
</dbReference>
<dbReference type="PANTHER" id="PTHR42874">
    <property type="entry name" value="URICASE"/>
    <property type="match status" value="1"/>
</dbReference>
<dbReference type="PANTHER" id="PTHR42874:SF1">
    <property type="entry name" value="URICASE"/>
    <property type="match status" value="1"/>
</dbReference>
<dbReference type="Pfam" id="PF01014">
    <property type="entry name" value="Uricase"/>
    <property type="match status" value="2"/>
</dbReference>
<dbReference type="PIRSF" id="PIRSF000241">
    <property type="entry name" value="Urate_oxidase"/>
    <property type="match status" value="1"/>
</dbReference>
<dbReference type="PRINTS" id="PR00093">
    <property type="entry name" value="URICASE"/>
</dbReference>
<dbReference type="SUPFAM" id="SSF55620">
    <property type="entry name" value="Tetrahydrobiopterin biosynthesis enzymes-like"/>
    <property type="match status" value="2"/>
</dbReference>
<dbReference type="PROSITE" id="PS00366">
    <property type="entry name" value="URICASE"/>
    <property type="match status" value="1"/>
</dbReference>
<comment type="function">
    <text evidence="2 4 8 10">Urate oxidase is a cofactorless enzyme involved in the metabolism of purines (PubMed:1339455, PubMed:17020862, PubMed:28272834, Ref.3). Catalyzes, in the presence of molecular oxygen, the hydroxylation of uric acid to metastable 5-hydroxyisourate (5-HIU) which is further degraded to allantoin (PubMed:1339455, PubMed:17020862, PubMed:28272834).</text>
</comment>
<comment type="catalytic activity">
    <reaction evidence="2 4 7 10">
        <text>urate + O2 + H2O = 5-hydroxyisourate + H2O2</text>
        <dbReference type="Rhea" id="RHEA:21368"/>
        <dbReference type="ChEBI" id="CHEBI:15377"/>
        <dbReference type="ChEBI" id="CHEBI:15379"/>
        <dbReference type="ChEBI" id="CHEBI:16240"/>
        <dbReference type="ChEBI" id="CHEBI:17775"/>
        <dbReference type="ChEBI" id="CHEBI:18072"/>
        <dbReference type="EC" id="1.7.3.3"/>
    </reaction>
    <physiologicalReaction direction="left-to-right" evidence="2 4 10">
        <dbReference type="Rhea" id="RHEA:21369"/>
    </physiologicalReaction>
</comment>
<comment type="activity regulation">
    <text evidence="4 6">8-Azaxanthine is one of the most potent competitive inhibitors of uricase activity (PubMed:17020862). Hypoxanthine has only a small inhibitor effect, and caffeine has no effect at all (PubMed:17020862). Azide not only competes with dioxygen but also competes with the substrate for its enzymatic site (PubMed:25005084).</text>
</comment>
<comment type="biophysicochemical properties">
    <phDependence>
        <text evidence="4">Optimum pH is 8.0.</text>
    </phDependence>
    <temperatureDependence>
        <text evidence="4">Optimum temperature is 30 degrees Celsius.</text>
    </temperatureDependence>
</comment>
<comment type="pathway">
    <text evidence="2">Purine metabolism; urate degradation; (S)-allantoin from urate: step 1/3.</text>
</comment>
<comment type="subunit">
    <text evidence="3 9">Homotetramer.</text>
</comment>
<comment type="subcellular location">
    <subcellularLocation>
        <location evidence="15">Peroxisome</location>
    </subcellularLocation>
</comment>
<comment type="biotechnology">
    <text evidence="8">Recombnant urate oxidase might be effective in reducing serum uric acid, and thus could be used to prevent and treat tumor lysis syndrome (TLS), a serious complication of malignancies that can result in renal failure or death in children with cancer.</text>
</comment>
<comment type="similarity">
    <text evidence="14">Belongs to the uricase family.</text>
</comment>
<evidence type="ECO:0000255" key="1"/>
<evidence type="ECO:0000269" key="2">
    <source>
    </source>
</evidence>
<evidence type="ECO:0000269" key="3">
    <source>
    </source>
</evidence>
<evidence type="ECO:0000269" key="4">
    <source>
    </source>
</evidence>
<evidence type="ECO:0000269" key="5">
    <source>
    </source>
</evidence>
<evidence type="ECO:0000269" key="6">
    <source>
    </source>
</evidence>
<evidence type="ECO:0000269" key="7">
    <source>
    </source>
</evidence>
<evidence type="ECO:0000269" key="8">
    <source>
    </source>
</evidence>
<evidence type="ECO:0000269" key="9">
    <source>
    </source>
</evidence>
<evidence type="ECO:0000269" key="10">
    <source ref="3"/>
</evidence>
<evidence type="ECO:0000303" key="11">
    <source>
    </source>
</evidence>
<evidence type="ECO:0000303" key="12">
    <source>
    </source>
</evidence>
<evidence type="ECO:0000303" key="13">
    <source>
    </source>
</evidence>
<evidence type="ECO:0000305" key="14"/>
<evidence type="ECO:0000305" key="15">
    <source>
    </source>
</evidence>
<evidence type="ECO:0000305" key="16">
    <source>
    </source>
</evidence>
<evidence type="ECO:0000305" key="17">
    <source>
    </source>
</evidence>
<evidence type="ECO:0007744" key="18">
    <source>
        <dbReference type="PDB" id="1R4S"/>
    </source>
</evidence>
<evidence type="ECO:0007744" key="19">
    <source>
        <dbReference type="PDB" id="1R4U"/>
    </source>
</evidence>
<evidence type="ECO:0007744" key="20">
    <source>
        <dbReference type="PDB" id="1R51"/>
    </source>
</evidence>
<evidence type="ECO:0007744" key="21">
    <source>
        <dbReference type="PDB" id="1R56"/>
    </source>
</evidence>
<evidence type="ECO:0007744" key="22">
    <source>
        <dbReference type="PDB" id="1WRR"/>
    </source>
</evidence>
<evidence type="ECO:0007744" key="23">
    <source>
        <dbReference type="PDB" id="1WS2"/>
    </source>
</evidence>
<evidence type="ECO:0007744" key="24">
    <source>
        <dbReference type="PDB" id="1WS3"/>
    </source>
</evidence>
<evidence type="ECO:0007744" key="25">
    <source>
        <dbReference type="PDB" id="1XT4"/>
    </source>
</evidence>
<evidence type="ECO:0007744" key="26">
    <source>
        <dbReference type="PDB" id="1XXJ"/>
    </source>
</evidence>
<evidence type="ECO:0007744" key="27">
    <source>
        <dbReference type="PDB" id="1XY3"/>
    </source>
</evidence>
<evidence type="ECO:0007744" key="28">
    <source>
        <dbReference type="PDB" id="2FUB"/>
    </source>
</evidence>
<evidence type="ECO:0007744" key="29">
    <source>
        <dbReference type="PDB" id="2FXL"/>
    </source>
</evidence>
<evidence type="ECO:0007744" key="30">
    <source>
        <dbReference type="PDB" id="2IBA"/>
    </source>
</evidence>
<evidence type="ECO:0007744" key="31">
    <source>
        <dbReference type="PDB" id="2IC0"/>
    </source>
</evidence>
<evidence type="ECO:0007744" key="32">
    <source>
        <dbReference type="PDB" id="2ICQ"/>
    </source>
</evidence>
<evidence type="ECO:0007744" key="33">
    <source>
        <dbReference type="PDB" id="2PES"/>
    </source>
</evidence>
<evidence type="ECO:0007744" key="34">
    <source>
        <dbReference type="PDB" id="2ZKA"/>
    </source>
</evidence>
<evidence type="ECO:0007744" key="35">
    <source>
        <dbReference type="PDB" id="2ZKB"/>
    </source>
</evidence>
<evidence type="ECO:0007744" key="36">
    <source>
        <dbReference type="PDB" id="3BJP"/>
    </source>
</evidence>
<evidence type="ECO:0007744" key="37">
    <source>
        <dbReference type="PDB" id="3BK8"/>
    </source>
</evidence>
<evidence type="ECO:0007744" key="38">
    <source>
        <dbReference type="PDB" id="3CKS"/>
    </source>
</evidence>
<evidence type="ECO:0007744" key="39">
    <source>
        <dbReference type="PDB" id="3CKU"/>
    </source>
</evidence>
<evidence type="ECO:0007744" key="40">
    <source>
        <dbReference type="PDB" id="3F2M"/>
    </source>
</evidence>
<evidence type="ECO:0007744" key="41">
    <source>
        <dbReference type="PDB" id="3GKO"/>
    </source>
</evidence>
<evidence type="ECO:0007744" key="42">
    <source>
        <dbReference type="PDB" id="3L8W"/>
    </source>
</evidence>
<evidence type="ECO:0007744" key="43">
    <source>
        <dbReference type="PDB" id="3L9G"/>
    </source>
</evidence>
<evidence type="ECO:0007744" key="44">
    <source>
        <dbReference type="PDB" id="3LBG"/>
    </source>
</evidence>
<evidence type="ECO:0007744" key="45">
    <source>
        <dbReference type="PDB" id="3LD4"/>
    </source>
</evidence>
<evidence type="ECO:0007744" key="46">
    <source>
        <dbReference type="PDB" id="3OBP"/>
    </source>
</evidence>
<evidence type="ECO:0007744" key="47">
    <source>
        <dbReference type="PDB" id="3P9F"/>
    </source>
</evidence>
<evidence type="ECO:0007744" key="48">
    <source>
        <dbReference type="PDB" id="3P9O"/>
    </source>
</evidence>
<evidence type="ECO:0007744" key="49">
    <source>
        <dbReference type="PDB" id="3PJK"/>
    </source>
</evidence>
<evidence type="ECO:0007744" key="50">
    <source>
        <dbReference type="PDB" id="3PK3"/>
    </source>
</evidence>
<evidence type="ECO:0007744" key="51">
    <source>
        <dbReference type="PDB" id="3PK4"/>
    </source>
</evidence>
<evidence type="ECO:0007744" key="52">
    <source>
        <dbReference type="PDB" id="3PK5"/>
    </source>
</evidence>
<evidence type="ECO:0007744" key="53">
    <source>
        <dbReference type="PDB" id="3PK6"/>
    </source>
</evidence>
<evidence type="ECO:0007744" key="54">
    <source>
        <dbReference type="PDB" id="3PK8"/>
    </source>
</evidence>
<evidence type="ECO:0007744" key="55">
    <source>
        <dbReference type="PDB" id="3PKF"/>
    </source>
</evidence>
<evidence type="ECO:0007744" key="56">
    <source>
        <dbReference type="PDB" id="3PKG"/>
    </source>
</evidence>
<evidence type="ECO:0007744" key="57">
    <source>
        <dbReference type="PDB" id="3PKH"/>
    </source>
</evidence>
<evidence type="ECO:0007744" key="58">
    <source>
        <dbReference type="PDB" id="3PKK"/>
    </source>
</evidence>
<evidence type="ECO:0007744" key="59">
    <source>
        <dbReference type="PDB" id="3PKL"/>
    </source>
</evidence>
<evidence type="ECO:0007744" key="60">
    <source>
        <dbReference type="PDB" id="3PKS"/>
    </source>
</evidence>
<evidence type="ECO:0007744" key="61">
    <source>
        <dbReference type="PDB" id="3PKT"/>
    </source>
</evidence>
<evidence type="ECO:0007744" key="62">
    <source>
        <dbReference type="PDB" id="3PKU"/>
    </source>
</evidence>
<evidence type="ECO:0007744" key="63">
    <source>
        <dbReference type="PDB" id="3PLE"/>
    </source>
</evidence>
<evidence type="ECO:0007744" key="64">
    <source>
        <dbReference type="PDB" id="3PLG"/>
    </source>
</evidence>
<evidence type="ECO:0007744" key="65">
    <source>
        <dbReference type="PDB" id="3PLH"/>
    </source>
</evidence>
<evidence type="ECO:0007744" key="66">
    <source>
        <dbReference type="PDB" id="3PLI"/>
    </source>
</evidence>
<evidence type="ECO:0007744" key="67">
    <source>
        <dbReference type="PDB" id="3PLJ"/>
    </source>
</evidence>
<evidence type="ECO:0007744" key="68">
    <source>
        <dbReference type="PDB" id="3PLM"/>
    </source>
</evidence>
<evidence type="ECO:0007744" key="69">
    <source>
        <dbReference type="PDB" id="4CW0"/>
    </source>
</evidence>
<evidence type="ECO:0007744" key="70">
    <source>
        <dbReference type="PDB" id="4CW2"/>
    </source>
</evidence>
<evidence type="ECO:0007744" key="71">
    <source>
        <dbReference type="PDB" id="4CW3"/>
    </source>
</evidence>
<evidence type="ECO:0007744" key="72">
    <source>
        <dbReference type="PDB" id="4CW6"/>
    </source>
</evidence>
<evidence type="ECO:0007744" key="73">
    <source>
        <dbReference type="PDB" id="4D12"/>
    </source>
</evidence>
<evidence type="ECO:0007744" key="74">
    <source>
        <dbReference type="PDB" id="4D13"/>
    </source>
</evidence>
<evidence type="ECO:0007744" key="75">
    <source>
        <dbReference type="PDB" id="4D17"/>
    </source>
</evidence>
<evidence type="ECO:0007744" key="76">
    <source>
        <dbReference type="PDB" id="4D19"/>
    </source>
</evidence>
<evidence type="ECO:0007744" key="77">
    <source>
        <dbReference type="PDB" id="4FSK"/>
    </source>
</evidence>
<evidence type="ECO:0007744" key="78">
    <source>
        <dbReference type="PDB" id="4N3M"/>
    </source>
</evidence>
<evidence type="ECO:0007744" key="79">
    <source>
        <dbReference type="PDB" id="4N9M"/>
    </source>
</evidence>
<evidence type="ECO:0007744" key="80">
    <source>
        <dbReference type="PDB" id="4N9S"/>
    </source>
</evidence>
<evidence type="ECO:0007744" key="81">
    <source>
        <dbReference type="PDB" id="4N9V"/>
    </source>
</evidence>
<evidence type="ECO:0007744" key="82">
    <source>
        <dbReference type="PDB" id="4OP6"/>
    </source>
</evidence>
<evidence type="ECO:0007744" key="83">
    <source>
        <dbReference type="PDB" id="4OP9"/>
    </source>
</evidence>
<evidence type="ECO:0007744" key="84">
    <source>
        <dbReference type="PDB" id="4OQC"/>
    </source>
</evidence>
<evidence type="ECO:0007744" key="85">
    <source>
        <dbReference type="PDB" id="4POE"/>
    </source>
</evidence>
<evidence type="ECO:0007744" key="86">
    <source>
        <dbReference type="PDB" id="4PR8"/>
    </source>
</evidence>
<evidence type="ECO:0007744" key="87">
    <source>
        <dbReference type="PDB" id="4PUV"/>
    </source>
</evidence>
<evidence type="ECO:0007744" key="88">
    <source>
        <dbReference type="PDB" id="5FRC"/>
    </source>
</evidence>
<evidence type="ECO:0007744" key="89">
    <source>
        <dbReference type="PDB" id="6I9X"/>
    </source>
</evidence>
<evidence type="ECO:0007744" key="90">
    <source>
        <dbReference type="PDB" id="6I9Z"/>
    </source>
</evidence>
<evidence type="ECO:0007744" key="91">
    <source>
        <dbReference type="PDB" id="6IA1"/>
    </source>
</evidence>
<evidence type="ECO:0007744" key="92">
    <source>
        <dbReference type="PDB" id="6IA3"/>
    </source>
</evidence>
<evidence type="ECO:0007744" key="93">
    <source>
        <dbReference type="PDB" id="6IA9"/>
    </source>
</evidence>
<evidence type="ECO:0007744" key="94">
    <source>
        <dbReference type="PDB" id="6IC1"/>
    </source>
</evidence>
<evidence type="ECO:0007744" key="95">
    <source>
        <dbReference type="PDB" id="6RGM"/>
    </source>
</evidence>
<evidence type="ECO:0007744" key="96">
    <source>
        <dbReference type="PDB" id="6RGT"/>
    </source>
</evidence>
<evidence type="ECO:0007744" key="97">
    <source>
        <dbReference type="PDB" id="7A0L"/>
    </source>
</evidence>
<evidence type="ECO:0007744" key="98">
    <source>
        <dbReference type="PDB" id="7P0C"/>
    </source>
</evidence>
<evidence type="ECO:0007829" key="99">
    <source>
        <dbReference type="PDB" id="3L8W"/>
    </source>
</evidence>
<sequence length="302" mass="34241">MSAVKAARYGKDNVRVYKVHKDEKTGVQTVYEMTVCVLLEGEIETSYTKADNSVIVATDSIKNTIYITAKQNPVTPPELFGSILGTHFIEKYNHIHAAHVNIVCHRWTRMDIDGKPHPHSFIRDSEEKRNVQVDVVEGKGIDIKSSLSGLTVLKSTNSQFWGFLRDEYTTLKETWDRILSTDVDATWQWKNFSGLQEVRSHVPKFDATWATAREVTLKTFAEDNSASVQATMYKMAEQILARQQLIETVEYSLPNKHYFEIDLSWHKGLQNTGKNAEVFAPQSDPNGLIKCTVGRSSLKSKL</sequence>